<reference key="1">
    <citation type="journal article" date="2001" name="Proc. Natl. Acad. Sci. U.S.A.">
        <title>Complete genome sequence of an M1 strain of Streptococcus pyogenes.</title>
        <authorList>
            <person name="Ferretti J.J."/>
            <person name="McShan W.M."/>
            <person name="Ajdic D.J."/>
            <person name="Savic D.J."/>
            <person name="Savic G."/>
            <person name="Lyon K."/>
            <person name="Primeaux C."/>
            <person name="Sezate S."/>
            <person name="Suvorov A.N."/>
            <person name="Kenton S."/>
            <person name="Lai H.S."/>
            <person name="Lin S.P."/>
            <person name="Qian Y."/>
            <person name="Jia H.G."/>
            <person name="Najar F.Z."/>
            <person name="Ren Q."/>
            <person name="Zhu H."/>
            <person name="Song L."/>
            <person name="White J."/>
            <person name="Yuan X."/>
            <person name="Clifton S.W."/>
            <person name="Roe B.A."/>
            <person name="McLaughlin R.E."/>
        </authorList>
    </citation>
    <scope>NUCLEOTIDE SEQUENCE [LARGE SCALE GENOMIC DNA]</scope>
    <source>
        <strain>ATCC 700294 / SF370 / Serotype M1</strain>
    </source>
</reference>
<reference key="2">
    <citation type="journal article" date="2005" name="J. Infect. Dis.">
        <title>Evolutionary origin and emergence of a highly successful clone of serotype M1 group A Streptococcus involved multiple horizontal gene transfer events.</title>
        <authorList>
            <person name="Sumby P."/>
            <person name="Porcella S.F."/>
            <person name="Madrigal A.G."/>
            <person name="Barbian K.D."/>
            <person name="Virtaneva K."/>
            <person name="Ricklefs S.M."/>
            <person name="Sturdevant D.E."/>
            <person name="Graham M.R."/>
            <person name="Vuopio-Varkila J."/>
            <person name="Hoe N.P."/>
            <person name="Musser J.M."/>
        </authorList>
    </citation>
    <scope>NUCLEOTIDE SEQUENCE [LARGE SCALE GENOMIC DNA]</scope>
    <source>
        <strain>ATCC BAA-947 / MGAS5005 / Serotype M1</strain>
    </source>
</reference>
<gene>
    <name evidence="1" type="primary">fabZ</name>
    <name type="ordered locus">SPy_1746</name>
    <name type="ordered locus">M5005_Spy1487</name>
</gene>
<dbReference type="EC" id="4.2.1.59" evidence="1"/>
<dbReference type="EMBL" id="AE004092">
    <property type="protein sequence ID" value="AAK34490.1"/>
    <property type="molecule type" value="Genomic_DNA"/>
</dbReference>
<dbReference type="EMBL" id="CP000017">
    <property type="protein sequence ID" value="AAZ52105.1"/>
    <property type="status" value="ALT_INIT"/>
    <property type="molecule type" value="Genomic_DNA"/>
</dbReference>
<dbReference type="RefSeq" id="NP_269769.1">
    <property type="nucleotide sequence ID" value="NC_002737.2"/>
</dbReference>
<dbReference type="SMR" id="P64110"/>
<dbReference type="PaxDb" id="1314-HKU360_01542"/>
<dbReference type="KEGG" id="spy:SPy_1746"/>
<dbReference type="KEGG" id="spz:M5005_Spy1487"/>
<dbReference type="PATRIC" id="fig|160490.10.peg.1520"/>
<dbReference type="HOGENOM" id="CLU_078912_1_2_9"/>
<dbReference type="OMA" id="FPGRPLM"/>
<dbReference type="Proteomes" id="UP000000750">
    <property type="component" value="Chromosome"/>
</dbReference>
<dbReference type="GO" id="GO:0005737">
    <property type="term" value="C:cytoplasm"/>
    <property type="evidence" value="ECO:0007669"/>
    <property type="project" value="UniProtKB-SubCell"/>
</dbReference>
<dbReference type="GO" id="GO:0016020">
    <property type="term" value="C:membrane"/>
    <property type="evidence" value="ECO:0007669"/>
    <property type="project" value="GOC"/>
</dbReference>
<dbReference type="GO" id="GO:0019171">
    <property type="term" value="F:(3R)-hydroxyacyl-[acyl-carrier-protein] dehydratase activity"/>
    <property type="evidence" value="ECO:0007669"/>
    <property type="project" value="UniProtKB-EC"/>
</dbReference>
<dbReference type="GO" id="GO:0006633">
    <property type="term" value="P:fatty acid biosynthetic process"/>
    <property type="evidence" value="ECO:0007669"/>
    <property type="project" value="UniProtKB-UniRule"/>
</dbReference>
<dbReference type="GO" id="GO:0009245">
    <property type="term" value="P:lipid A biosynthetic process"/>
    <property type="evidence" value="ECO:0007669"/>
    <property type="project" value="UniProtKB-UniRule"/>
</dbReference>
<dbReference type="CDD" id="cd01288">
    <property type="entry name" value="FabZ"/>
    <property type="match status" value="1"/>
</dbReference>
<dbReference type="FunFam" id="3.10.129.10:FF:000001">
    <property type="entry name" value="3-hydroxyacyl-[acyl-carrier-protein] dehydratase FabZ"/>
    <property type="match status" value="1"/>
</dbReference>
<dbReference type="Gene3D" id="3.10.129.10">
    <property type="entry name" value="Hotdog Thioesterase"/>
    <property type="match status" value="1"/>
</dbReference>
<dbReference type="HAMAP" id="MF_00406">
    <property type="entry name" value="FabZ"/>
    <property type="match status" value="1"/>
</dbReference>
<dbReference type="InterPro" id="IPR013114">
    <property type="entry name" value="FabA_FabZ"/>
</dbReference>
<dbReference type="InterPro" id="IPR010084">
    <property type="entry name" value="FabZ"/>
</dbReference>
<dbReference type="InterPro" id="IPR029069">
    <property type="entry name" value="HotDog_dom_sf"/>
</dbReference>
<dbReference type="NCBIfam" id="TIGR01750">
    <property type="entry name" value="fabZ"/>
    <property type="match status" value="1"/>
</dbReference>
<dbReference type="NCBIfam" id="NF000582">
    <property type="entry name" value="PRK00006.1"/>
    <property type="match status" value="1"/>
</dbReference>
<dbReference type="PANTHER" id="PTHR30272">
    <property type="entry name" value="3-HYDROXYACYL-[ACYL-CARRIER-PROTEIN] DEHYDRATASE"/>
    <property type="match status" value="1"/>
</dbReference>
<dbReference type="PANTHER" id="PTHR30272:SF1">
    <property type="entry name" value="3-HYDROXYACYL-[ACYL-CARRIER-PROTEIN] DEHYDRATASE"/>
    <property type="match status" value="1"/>
</dbReference>
<dbReference type="Pfam" id="PF07977">
    <property type="entry name" value="FabA"/>
    <property type="match status" value="1"/>
</dbReference>
<dbReference type="SUPFAM" id="SSF54637">
    <property type="entry name" value="Thioesterase/thiol ester dehydrase-isomerase"/>
    <property type="match status" value="1"/>
</dbReference>
<keyword id="KW-0963">Cytoplasm</keyword>
<keyword id="KW-0441">Lipid A biosynthesis</keyword>
<keyword id="KW-0444">Lipid biosynthesis</keyword>
<keyword id="KW-0443">Lipid metabolism</keyword>
<keyword id="KW-0456">Lyase</keyword>
<keyword id="KW-1185">Reference proteome</keyword>
<protein>
    <recommendedName>
        <fullName evidence="1">3-hydroxyacyl-[acyl-carrier-protein] dehydratase FabZ</fullName>
        <ecNumber evidence="1">4.2.1.59</ecNumber>
    </recommendedName>
    <alternativeName>
        <fullName evidence="1">(3R)-hydroxymyristoyl-[acyl-carrier-protein] dehydratase</fullName>
        <shortName evidence="1">(3R)-hydroxymyristoyl-ACP dehydrase</shortName>
    </alternativeName>
    <alternativeName>
        <fullName evidence="1">Beta-hydroxyacyl-ACP dehydratase</fullName>
    </alternativeName>
</protein>
<accession>P64110</accession>
<accession>P58175</accession>
<accession>Q48X20</accession>
<organism>
    <name type="scientific">Streptococcus pyogenes serotype M1</name>
    <dbReference type="NCBI Taxonomy" id="301447"/>
    <lineage>
        <taxon>Bacteria</taxon>
        <taxon>Bacillati</taxon>
        <taxon>Bacillota</taxon>
        <taxon>Bacilli</taxon>
        <taxon>Lactobacillales</taxon>
        <taxon>Streptococcaceae</taxon>
        <taxon>Streptococcus</taxon>
    </lineage>
</organism>
<evidence type="ECO:0000255" key="1">
    <source>
        <dbReference type="HAMAP-Rule" id="MF_00406"/>
    </source>
</evidence>
<evidence type="ECO:0000305" key="2"/>
<proteinExistence type="inferred from homology"/>
<comment type="function">
    <text evidence="1">Involved in unsaturated fatty acids biosynthesis. Catalyzes the dehydration of short chain beta-hydroxyacyl-ACPs and long chain saturated and unsaturated beta-hydroxyacyl-ACPs.</text>
</comment>
<comment type="catalytic activity">
    <reaction evidence="1">
        <text>a (3R)-hydroxyacyl-[ACP] = a (2E)-enoyl-[ACP] + H2O</text>
        <dbReference type="Rhea" id="RHEA:13097"/>
        <dbReference type="Rhea" id="RHEA-COMP:9925"/>
        <dbReference type="Rhea" id="RHEA-COMP:9945"/>
        <dbReference type="ChEBI" id="CHEBI:15377"/>
        <dbReference type="ChEBI" id="CHEBI:78784"/>
        <dbReference type="ChEBI" id="CHEBI:78827"/>
        <dbReference type="EC" id="4.2.1.59"/>
    </reaction>
</comment>
<comment type="subcellular location">
    <subcellularLocation>
        <location evidence="1">Cytoplasm</location>
    </subcellularLocation>
</comment>
<comment type="similarity">
    <text evidence="1">Belongs to the thioester dehydratase family. FabZ subfamily.</text>
</comment>
<comment type="sequence caution" evidence="2">
    <conflict type="erroneous initiation">
        <sequence resource="EMBL-CDS" id="AAZ52105"/>
    </conflict>
</comment>
<feature type="chain" id="PRO_0000091743" description="3-hydroxyacyl-[acyl-carrier-protein] dehydratase FabZ">
    <location>
        <begin position="1"/>
        <end position="139"/>
    </location>
</feature>
<feature type="active site" evidence="1">
    <location>
        <position position="46"/>
    </location>
</feature>
<name>FABZ_STRP1</name>
<sequence>MDIREIQAALPHRYPMLLVDRVLEVSDDHIVAIKNVTINEPFFNGHFPHYPVMPGVLIMEALAQTAGVLELSKEENKGKLVFYAGMDKVKFKKQVVPGDQLVMTATFIKRRGTIAVVEARAEVDGKLAASGTLTFACGQ</sequence>